<keyword id="KW-0028">Amino-acid biosynthesis</keyword>
<keyword id="KW-0057">Aromatic amino acid biosynthesis</keyword>
<keyword id="KW-0328">Glycosyltransferase</keyword>
<keyword id="KW-0460">Magnesium</keyword>
<keyword id="KW-0479">Metal-binding</keyword>
<keyword id="KW-0808">Transferase</keyword>
<keyword id="KW-0822">Tryptophan biosynthesis</keyword>
<protein>
    <recommendedName>
        <fullName evidence="1">Anthranilate phosphoribosyltransferase</fullName>
        <ecNumber evidence="1">2.4.2.18</ecNumber>
    </recommendedName>
</protein>
<sequence length="345" mass="35337">MDSFRPHLAKVAGGLALDRAEARAAFDDLLSGEVTPVQAGAFLTALKVRGESVEEIVGAAEAMRARMTRVAAPENAVDVVGTGGDHSGSVNVSTLAAIVVAACGVPVAKHGNRAATSRSGAADVLAALGVRLGLDPAAQARCLDEAGLCFLFAQAHHPAMRHVAAVRSELPVRTIFNLLGPLSNPAGVGYQLFGVAQAALAEPLTRVLAELGSRRVWTVHGSDGLDEITVTGPTQVVALDEGRLCHFTIDPREFGLALRAPEELRGGDPADNARSLEAVLAGARNAYRDIAVLNAGAALVVAGAAQALADGVAQAQDAVDSGAARATLARLVRASNDHSNGQEGR</sequence>
<gene>
    <name evidence="1" type="primary">trpD</name>
    <name type="ordered locus">Mrad2831_3100</name>
</gene>
<dbReference type="EC" id="2.4.2.18" evidence="1"/>
<dbReference type="EMBL" id="CP001001">
    <property type="protein sequence ID" value="ACB25082.1"/>
    <property type="molecule type" value="Genomic_DNA"/>
</dbReference>
<dbReference type="RefSeq" id="WP_012320047.1">
    <property type="nucleotide sequence ID" value="NC_010505.1"/>
</dbReference>
<dbReference type="SMR" id="B1M5Q2"/>
<dbReference type="STRING" id="426355.Mrad2831_3100"/>
<dbReference type="GeneID" id="6139146"/>
<dbReference type="KEGG" id="mrd:Mrad2831_3100"/>
<dbReference type="PATRIC" id="fig|426355.14.peg.3168"/>
<dbReference type="eggNOG" id="COG0547">
    <property type="taxonomic scope" value="Bacteria"/>
</dbReference>
<dbReference type="HOGENOM" id="CLU_034315_2_1_5"/>
<dbReference type="OrthoDB" id="9806430at2"/>
<dbReference type="UniPathway" id="UPA00035">
    <property type="reaction ID" value="UER00041"/>
</dbReference>
<dbReference type="Proteomes" id="UP000006589">
    <property type="component" value="Chromosome"/>
</dbReference>
<dbReference type="GO" id="GO:0005829">
    <property type="term" value="C:cytosol"/>
    <property type="evidence" value="ECO:0007669"/>
    <property type="project" value="TreeGrafter"/>
</dbReference>
<dbReference type="GO" id="GO:0004048">
    <property type="term" value="F:anthranilate phosphoribosyltransferase activity"/>
    <property type="evidence" value="ECO:0007669"/>
    <property type="project" value="UniProtKB-UniRule"/>
</dbReference>
<dbReference type="GO" id="GO:0000287">
    <property type="term" value="F:magnesium ion binding"/>
    <property type="evidence" value="ECO:0007669"/>
    <property type="project" value="UniProtKB-UniRule"/>
</dbReference>
<dbReference type="GO" id="GO:0000162">
    <property type="term" value="P:L-tryptophan biosynthetic process"/>
    <property type="evidence" value="ECO:0007669"/>
    <property type="project" value="UniProtKB-UniRule"/>
</dbReference>
<dbReference type="FunFam" id="3.40.1030.10:FF:000002">
    <property type="entry name" value="Anthranilate phosphoribosyltransferase"/>
    <property type="match status" value="1"/>
</dbReference>
<dbReference type="Gene3D" id="3.40.1030.10">
    <property type="entry name" value="Nucleoside phosphorylase/phosphoribosyltransferase catalytic domain"/>
    <property type="match status" value="1"/>
</dbReference>
<dbReference type="Gene3D" id="1.20.970.10">
    <property type="entry name" value="Transferase, Pyrimidine Nucleoside Phosphorylase, Chain C"/>
    <property type="match status" value="1"/>
</dbReference>
<dbReference type="HAMAP" id="MF_00211">
    <property type="entry name" value="TrpD"/>
    <property type="match status" value="1"/>
</dbReference>
<dbReference type="InterPro" id="IPR005940">
    <property type="entry name" value="Anthranilate_Pribosyl_Tfrase"/>
</dbReference>
<dbReference type="InterPro" id="IPR000312">
    <property type="entry name" value="Glycosyl_Trfase_fam3"/>
</dbReference>
<dbReference type="InterPro" id="IPR017459">
    <property type="entry name" value="Glycosyl_Trfase_fam3_N_dom"/>
</dbReference>
<dbReference type="InterPro" id="IPR036320">
    <property type="entry name" value="Glycosyl_Trfase_fam3_N_dom_sf"/>
</dbReference>
<dbReference type="InterPro" id="IPR035902">
    <property type="entry name" value="Nuc_phospho_transferase"/>
</dbReference>
<dbReference type="NCBIfam" id="TIGR01245">
    <property type="entry name" value="trpD"/>
    <property type="match status" value="1"/>
</dbReference>
<dbReference type="PANTHER" id="PTHR43285">
    <property type="entry name" value="ANTHRANILATE PHOSPHORIBOSYLTRANSFERASE"/>
    <property type="match status" value="1"/>
</dbReference>
<dbReference type="PANTHER" id="PTHR43285:SF2">
    <property type="entry name" value="ANTHRANILATE PHOSPHORIBOSYLTRANSFERASE"/>
    <property type="match status" value="1"/>
</dbReference>
<dbReference type="Pfam" id="PF02885">
    <property type="entry name" value="Glycos_trans_3N"/>
    <property type="match status" value="1"/>
</dbReference>
<dbReference type="Pfam" id="PF00591">
    <property type="entry name" value="Glycos_transf_3"/>
    <property type="match status" value="1"/>
</dbReference>
<dbReference type="SUPFAM" id="SSF52418">
    <property type="entry name" value="Nucleoside phosphorylase/phosphoribosyltransferase catalytic domain"/>
    <property type="match status" value="1"/>
</dbReference>
<dbReference type="SUPFAM" id="SSF47648">
    <property type="entry name" value="Nucleoside phosphorylase/phosphoribosyltransferase N-terminal domain"/>
    <property type="match status" value="1"/>
</dbReference>
<feature type="chain" id="PRO_1000099821" description="Anthranilate phosphoribosyltransferase">
    <location>
        <begin position="1"/>
        <end position="345"/>
    </location>
</feature>
<feature type="binding site" evidence="1">
    <location>
        <position position="81"/>
    </location>
    <ligand>
        <name>5-phospho-alpha-D-ribose 1-diphosphate</name>
        <dbReference type="ChEBI" id="CHEBI:58017"/>
    </ligand>
</feature>
<feature type="binding site" evidence="1">
    <location>
        <position position="81"/>
    </location>
    <ligand>
        <name>anthranilate</name>
        <dbReference type="ChEBI" id="CHEBI:16567"/>
        <label>1</label>
    </ligand>
</feature>
<feature type="binding site" evidence="1">
    <location>
        <begin position="84"/>
        <end position="85"/>
    </location>
    <ligand>
        <name>5-phospho-alpha-D-ribose 1-diphosphate</name>
        <dbReference type="ChEBI" id="CHEBI:58017"/>
    </ligand>
</feature>
<feature type="binding site" evidence="1">
    <location>
        <position position="89"/>
    </location>
    <ligand>
        <name>5-phospho-alpha-D-ribose 1-diphosphate</name>
        <dbReference type="ChEBI" id="CHEBI:58017"/>
    </ligand>
</feature>
<feature type="binding site" evidence="1">
    <location>
        <begin position="91"/>
        <end position="94"/>
    </location>
    <ligand>
        <name>5-phospho-alpha-D-ribose 1-diphosphate</name>
        <dbReference type="ChEBI" id="CHEBI:58017"/>
    </ligand>
</feature>
<feature type="binding site" evidence="1">
    <location>
        <position position="93"/>
    </location>
    <ligand>
        <name>Mg(2+)</name>
        <dbReference type="ChEBI" id="CHEBI:18420"/>
        <label>1</label>
    </ligand>
</feature>
<feature type="binding site" evidence="1">
    <location>
        <begin position="109"/>
        <end position="117"/>
    </location>
    <ligand>
        <name>5-phospho-alpha-D-ribose 1-diphosphate</name>
        <dbReference type="ChEBI" id="CHEBI:58017"/>
    </ligand>
</feature>
<feature type="binding site" evidence="1">
    <location>
        <position position="112"/>
    </location>
    <ligand>
        <name>anthranilate</name>
        <dbReference type="ChEBI" id="CHEBI:16567"/>
        <label>1</label>
    </ligand>
</feature>
<feature type="binding site" evidence="1">
    <location>
        <position position="121"/>
    </location>
    <ligand>
        <name>5-phospho-alpha-D-ribose 1-diphosphate</name>
        <dbReference type="ChEBI" id="CHEBI:58017"/>
    </ligand>
</feature>
<feature type="binding site" evidence="1">
    <location>
        <position position="167"/>
    </location>
    <ligand>
        <name>anthranilate</name>
        <dbReference type="ChEBI" id="CHEBI:16567"/>
        <label>2</label>
    </ligand>
</feature>
<feature type="binding site" evidence="1">
    <location>
        <position position="226"/>
    </location>
    <ligand>
        <name>Mg(2+)</name>
        <dbReference type="ChEBI" id="CHEBI:18420"/>
        <label>2</label>
    </ligand>
</feature>
<feature type="binding site" evidence="1">
    <location>
        <position position="227"/>
    </location>
    <ligand>
        <name>Mg(2+)</name>
        <dbReference type="ChEBI" id="CHEBI:18420"/>
        <label>1</label>
    </ligand>
</feature>
<feature type="binding site" evidence="1">
    <location>
        <position position="227"/>
    </location>
    <ligand>
        <name>Mg(2+)</name>
        <dbReference type="ChEBI" id="CHEBI:18420"/>
        <label>2</label>
    </ligand>
</feature>
<accession>B1M5Q2</accession>
<reference key="1">
    <citation type="submission" date="2008-03" db="EMBL/GenBank/DDBJ databases">
        <title>Complete sequence of chromosome of Methylobacterium radiotolerans JCM 2831.</title>
        <authorList>
            <consortium name="US DOE Joint Genome Institute"/>
            <person name="Copeland A."/>
            <person name="Lucas S."/>
            <person name="Lapidus A."/>
            <person name="Glavina del Rio T."/>
            <person name="Dalin E."/>
            <person name="Tice H."/>
            <person name="Bruce D."/>
            <person name="Goodwin L."/>
            <person name="Pitluck S."/>
            <person name="Kiss H."/>
            <person name="Brettin T."/>
            <person name="Detter J.C."/>
            <person name="Han C."/>
            <person name="Kuske C.R."/>
            <person name="Schmutz J."/>
            <person name="Larimer F."/>
            <person name="Land M."/>
            <person name="Hauser L."/>
            <person name="Kyrpides N."/>
            <person name="Mikhailova N."/>
            <person name="Marx C.J."/>
            <person name="Richardson P."/>
        </authorList>
    </citation>
    <scope>NUCLEOTIDE SEQUENCE [LARGE SCALE GENOMIC DNA]</scope>
    <source>
        <strain>ATCC 27329 / DSM 1819 / JCM 2831 / NBRC 15690 / NCIMB 10815 / 0-1</strain>
    </source>
</reference>
<name>TRPD_METRJ</name>
<proteinExistence type="inferred from homology"/>
<evidence type="ECO:0000255" key="1">
    <source>
        <dbReference type="HAMAP-Rule" id="MF_00211"/>
    </source>
</evidence>
<organism>
    <name type="scientific">Methylobacterium radiotolerans (strain ATCC 27329 / DSM 1819 / JCM 2831 / NBRC 15690 / NCIMB 10815 / 0-1)</name>
    <dbReference type="NCBI Taxonomy" id="426355"/>
    <lineage>
        <taxon>Bacteria</taxon>
        <taxon>Pseudomonadati</taxon>
        <taxon>Pseudomonadota</taxon>
        <taxon>Alphaproteobacteria</taxon>
        <taxon>Hyphomicrobiales</taxon>
        <taxon>Methylobacteriaceae</taxon>
        <taxon>Methylobacterium</taxon>
    </lineage>
</organism>
<comment type="function">
    <text evidence="1">Catalyzes the transfer of the phosphoribosyl group of 5-phosphorylribose-1-pyrophosphate (PRPP) to anthranilate to yield N-(5'-phosphoribosyl)-anthranilate (PRA).</text>
</comment>
<comment type="catalytic activity">
    <reaction evidence="1">
        <text>N-(5-phospho-beta-D-ribosyl)anthranilate + diphosphate = 5-phospho-alpha-D-ribose 1-diphosphate + anthranilate</text>
        <dbReference type="Rhea" id="RHEA:11768"/>
        <dbReference type="ChEBI" id="CHEBI:16567"/>
        <dbReference type="ChEBI" id="CHEBI:18277"/>
        <dbReference type="ChEBI" id="CHEBI:33019"/>
        <dbReference type="ChEBI" id="CHEBI:58017"/>
        <dbReference type="EC" id="2.4.2.18"/>
    </reaction>
</comment>
<comment type="cofactor">
    <cofactor evidence="1">
        <name>Mg(2+)</name>
        <dbReference type="ChEBI" id="CHEBI:18420"/>
    </cofactor>
    <text evidence="1">Binds 2 magnesium ions per monomer.</text>
</comment>
<comment type="pathway">
    <text evidence="1">Amino-acid biosynthesis; L-tryptophan biosynthesis; L-tryptophan from chorismate: step 2/5.</text>
</comment>
<comment type="subunit">
    <text evidence="1">Homodimer.</text>
</comment>
<comment type="similarity">
    <text evidence="1">Belongs to the anthranilate phosphoribosyltransferase family.</text>
</comment>